<sequence length="126" mass="14761">MTKISVGLQLVTRDSREKLNNIVIKSSLRLNRSNPNISELCFLKTCHLCNKQLHQDKDVYMYRGDLGFCSRECRESQMLIDDRKELEASTKMMLASYRRCNNGAGKSESRNLFDDLRRRRQLFIVP</sequence>
<reference key="1">
    <citation type="journal article" date="2000" name="Nature">
        <title>Sequence and analysis of chromosome 1 of the plant Arabidopsis thaliana.</title>
        <authorList>
            <person name="Theologis A."/>
            <person name="Ecker J.R."/>
            <person name="Palm C.J."/>
            <person name="Federspiel N.A."/>
            <person name="Kaul S."/>
            <person name="White O."/>
            <person name="Alonso J."/>
            <person name="Altafi H."/>
            <person name="Araujo R."/>
            <person name="Bowman C.L."/>
            <person name="Brooks S.Y."/>
            <person name="Buehler E."/>
            <person name="Chan A."/>
            <person name="Chao Q."/>
            <person name="Chen H."/>
            <person name="Cheuk R.F."/>
            <person name="Chin C.W."/>
            <person name="Chung M.K."/>
            <person name="Conn L."/>
            <person name="Conway A.B."/>
            <person name="Conway A.R."/>
            <person name="Creasy T.H."/>
            <person name="Dewar K."/>
            <person name="Dunn P."/>
            <person name="Etgu P."/>
            <person name="Feldblyum T.V."/>
            <person name="Feng J.-D."/>
            <person name="Fong B."/>
            <person name="Fujii C.Y."/>
            <person name="Gill J.E."/>
            <person name="Goldsmith A.D."/>
            <person name="Haas B."/>
            <person name="Hansen N.F."/>
            <person name="Hughes B."/>
            <person name="Huizar L."/>
            <person name="Hunter J.L."/>
            <person name="Jenkins J."/>
            <person name="Johnson-Hopson C."/>
            <person name="Khan S."/>
            <person name="Khaykin E."/>
            <person name="Kim C.J."/>
            <person name="Koo H.L."/>
            <person name="Kremenetskaia I."/>
            <person name="Kurtz D.B."/>
            <person name="Kwan A."/>
            <person name="Lam B."/>
            <person name="Langin-Hooper S."/>
            <person name="Lee A."/>
            <person name="Lee J.M."/>
            <person name="Lenz C.A."/>
            <person name="Li J.H."/>
            <person name="Li Y.-P."/>
            <person name="Lin X."/>
            <person name="Liu S.X."/>
            <person name="Liu Z.A."/>
            <person name="Luros J.S."/>
            <person name="Maiti R."/>
            <person name="Marziali A."/>
            <person name="Militscher J."/>
            <person name="Miranda M."/>
            <person name="Nguyen M."/>
            <person name="Nierman W.C."/>
            <person name="Osborne B.I."/>
            <person name="Pai G."/>
            <person name="Peterson J."/>
            <person name="Pham P.K."/>
            <person name="Rizzo M."/>
            <person name="Rooney T."/>
            <person name="Rowley D."/>
            <person name="Sakano H."/>
            <person name="Salzberg S.L."/>
            <person name="Schwartz J.R."/>
            <person name="Shinn P."/>
            <person name="Southwick A.M."/>
            <person name="Sun H."/>
            <person name="Tallon L.J."/>
            <person name="Tambunga G."/>
            <person name="Toriumi M.J."/>
            <person name="Town C.D."/>
            <person name="Utterback T."/>
            <person name="Van Aken S."/>
            <person name="Vaysberg M."/>
            <person name="Vysotskaia V.S."/>
            <person name="Walker M."/>
            <person name="Wu D."/>
            <person name="Yu G."/>
            <person name="Fraser C.M."/>
            <person name="Venter J.C."/>
            <person name="Davis R.W."/>
        </authorList>
    </citation>
    <scope>NUCLEOTIDE SEQUENCE [LARGE SCALE GENOMIC DNA]</scope>
    <source>
        <strain>cv. Columbia</strain>
    </source>
</reference>
<reference key="2">
    <citation type="journal article" date="2017" name="Plant J.">
        <title>Araport11: a complete reannotation of the Arabidopsis thaliana reference genome.</title>
        <authorList>
            <person name="Cheng C.Y."/>
            <person name="Krishnakumar V."/>
            <person name="Chan A.P."/>
            <person name="Thibaud-Nissen F."/>
            <person name="Schobel S."/>
            <person name="Town C.D."/>
        </authorList>
    </citation>
    <scope>GENOME REANNOTATION</scope>
    <source>
        <strain>cv. Columbia</strain>
    </source>
</reference>
<reference key="3">
    <citation type="journal article" date="2002" name="Science">
        <title>Functional annotation of a full-length Arabidopsis cDNA collection.</title>
        <authorList>
            <person name="Seki M."/>
            <person name="Narusaka M."/>
            <person name="Kamiya A."/>
            <person name="Ishida J."/>
            <person name="Satou M."/>
            <person name="Sakurai T."/>
            <person name="Nakajima M."/>
            <person name="Enju A."/>
            <person name="Akiyama K."/>
            <person name="Oono Y."/>
            <person name="Muramatsu M."/>
            <person name="Hayashizaki Y."/>
            <person name="Kawai J."/>
            <person name="Carninci P."/>
            <person name="Itoh M."/>
            <person name="Ishii Y."/>
            <person name="Arakawa T."/>
            <person name="Shibata K."/>
            <person name="Shinagawa A."/>
            <person name="Shinozaki K."/>
        </authorList>
    </citation>
    <scope>NUCLEOTIDE SEQUENCE [LARGE SCALE MRNA]</scope>
    <source>
        <strain>cv. Columbia</strain>
    </source>
</reference>
<reference key="4">
    <citation type="journal article" date="2003" name="Science">
        <title>Empirical analysis of transcriptional activity in the Arabidopsis genome.</title>
        <authorList>
            <person name="Yamada K."/>
            <person name="Lim J."/>
            <person name="Dale J.M."/>
            <person name="Chen H."/>
            <person name="Shinn P."/>
            <person name="Palm C.J."/>
            <person name="Southwick A.M."/>
            <person name="Wu H.C."/>
            <person name="Kim C.J."/>
            <person name="Nguyen M."/>
            <person name="Pham P.K."/>
            <person name="Cheuk R.F."/>
            <person name="Karlin-Newmann G."/>
            <person name="Liu S.X."/>
            <person name="Lam B."/>
            <person name="Sakano H."/>
            <person name="Wu T."/>
            <person name="Yu G."/>
            <person name="Miranda M."/>
            <person name="Quach H.L."/>
            <person name="Tripp M."/>
            <person name="Chang C.H."/>
            <person name="Lee J.M."/>
            <person name="Toriumi M.J."/>
            <person name="Chan M.M."/>
            <person name="Tang C.C."/>
            <person name="Onodera C.S."/>
            <person name="Deng J.M."/>
            <person name="Akiyama K."/>
            <person name="Ansari Y."/>
            <person name="Arakawa T."/>
            <person name="Banh J."/>
            <person name="Banno F."/>
            <person name="Bowser L."/>
            <person name="Brooks S.Y."/>
            <person name="Carninci P."/>
            <person name="Chao Q."/>
            <person name="Choy N."/>
            <person name="Enju A."/>
            <person name="Goldsmith A.D."/>
            <person name="Gurjal M."/>
            <person name="Hansen N.F."/>
            <person name="Hayashizaki Y."/>
            <person name="Johnson-Hopson C."/>
            <person name="Hsuan V.W."/>
            <person name="Iida K."/>
            <person name="Karnes M."/>
            <person name="Khan S."/>
            <person name="Koesema E."/>
            <person name="Ishida J."/>
            <person name="Jiang P.X."/>
            <person name="Jones T."/>
            <person name="Kawai J."/>
            <person name="Kamiya A."/>
            <person name="Meyers C."/>
            <person name="Nakajima M."/>
            <person name="Narusaka M."/>
            <person name="Seki M."/>
            <person name="Sakurai T."/>
            <person name="Satou M."/>
            <person name="Tamse R."/>
            <person name="Vaysberg M."/>
            <person name="Wallender E.K."/>
            <person name="Wong C."/>
            <person name="Yamamura Y."/>
            <person name="Yuan S."/>
            <person name="Shinozaki K."/>
            <person name="Davis R.W."/>
            <person name="Theologis A."/>
            <person name="Ecker J.R."/>
        </authorList>
    </citation>
    <scope>NUCLEOTIDE SEQUENCE [LARGE SCALE MRNA]</scope>
    <source>
        <strain>cv. Columbia</strain>
    </source>
</reference>
<reference key="5">
    <citation type="journal article" date="2014" name="Front. Plant Sci.">
        <title>The complex becomes more complex: protein-protein interactions of SnRK1 with DUF581 family proteins provide a framework for cell- and stimulus type-specific SnRK1 signaling in plants.</title>
        <authorList>
            <person name="Nietzsche M."/>
            <person name="Schiessl I."/>
            <person name="Boernke F."/>
        </authorList>
    </citation>
    <scope>GENE FAMILY</scope>
    <scope>FUNCTION</scope>
</reference>
<reference key="6">
    <citation type="journal article" date="2014" name="Front. Plant Sci.">
        <title>Corrigendum: The complex becomes more complex: protein-protein interactions of SnRK1 with DUF581 family proteins provide a framework for cell- and stimulus type-specific SnRK1 signaling in plants.</title>
        <authorList>
            <person name="Boernke F."/>
        </authorList>
    </citation>
    <scope>ERRATUM OF PUBMED:24600465</scope>
</reference>
<reference key="7">
    <citation type="journal article" date="2014" name="PLoS ONE">
        <title>DUF581 is plant specific FCS-like zinc finger involved in protein-protein interaction.</title>
        <authorList>
            <person name="Jamsheer K M."/>
            <person name="Laxmi A."/>
        </authorList>
    </citation>
    <scope>GENE FAMILY</scope>
    <scope>NOMENCLATURE</scope>
</reference>
<reference key="8">
    <citation type="journal article" date="2015" name="Front. Plant Sci.">
        <title>Expression of Arabidopsis FCS-Like Zinc finger genes is differentially regulated by sugars, cellular energy level, and abiotic stress.</title>
        <authorList>
            <person name="Jamsheer K M."/>
            <person name="Laxmi A."/>
        </authorList>
    </citation>
    <scope>INDUCTION</scope>
</reference>
<reference key="9">
    <citation type="journal article" date="2018" name="J. Biol. Chem.">
        <title>The FCS-like zinc finger scaffold of the kinase SnRK1 is formed by the coordinated actions of the FLZ domain and intrinsically disordered regions.</title>
        <authorList>
            <person name="Jamsheer K M."/>
            <person name="Shukla B.N."/>
            <person name="Jindal S."/>
            <person name="Gopan N."/>
            <person name="Mannully C.T."/>
            <person name="Laxmi A."/>
        </authorList>
    </citation>
    <scope>INTERACTION WITH KIN10 AND KIN11</scope>
    <scope>SUBUNIT</scope>
    <scope>SUBCELLULAR LOCATION</scope>
</reference>
<feature type="chain" id="PRO_0000445508" description="FCS-Like Zinc finger 18">
    <location>
        <begin position="1"/>
        <end position="126"/>
    </location>
</feature>
<feature type="zinc finger region" description="FLZ-type" evidence="1">
    <location>
        <begin position="41"/>
        <end position="85"/>
    </location>
</feature>
<gene>
    <name evidence="6" type="primary">FLZ18</name>
    <name evidence="5" type="synonym">DUF581-4</name>
    <name evidence="8" type="ordered locus">At1g53903</name>
    <name evidence="9" type="ORF">T28A20</name>
</gene>
<comment type="function">
    <text evidence="2">May act as an adapter to facilitate the interaction of SnRK1 complex with effector proteins, conferring tissue- and stimulus-type specific differences in the SnRK1 regulation pathway.</text>
</comment>
<comment type="subunit">
    <text evidence="4">Interacts with KIN10 and KIN11 via its FLZ-type zinc finger domain (PubMed:29945970). Forms heterodimer with FLZ2 in vitro (PubMed:29945970).</text>
</comment>
<comment type="subcellular location">
    <subcellularLocation>
        <location evidence="4">Cytoplasm</location>
    </subcellularLocation>
    <subcellularLocation>
        <location evidence="4">Nucleus</location>
    </subcellularLocation>
</comment>
<comment type="induction">
    <text evidence="3">Up-regulated in response to prolonged energy depletion (PubMed:26442059). Down-regulated by glucose, sucrose and mannose (PubMed:26442059). Induced by NaCl and abscissic acid (ABA) (PubMed:26442059).</text>
</comment>
<comment type="similarity">
    <text evidence="7">Belongs to the FLZ family.</text>
</comment>
<evidence type="ECO:0000255" key="1">
    <source>
        <dbReference type="PROSITE-ProRule" id="PRU01131"/>
    </source>
</evidence>
<evidence type="ECO:0000269" key="2">
    <source>
    </source>
</evidence>
<evidence type="ECO:0000269" key="3">
    <source>
    </source>
</evidence>
<evidence type="ECO:0000269" key="4">
    <source>
    </source>
</evidence>
<evidence type="ECO:0000303" key="5">
    <source>
    </source>
</evidence>
<evidence type="ECO:0000303" key="6">
    <source>
    </source>
</evidence>
<evidence type="ECO:0000305" key="7"/>
<evidence type="ECO:0000312" key="8">
    <source>
        <dbReference type="Araport" id="AT1G53903"/>
    </source>
</evidence>
<evidence type="ECO:0000312" key="9">
    <source>
        <dbReference type="EMBL" id="AC009324"/>
    </source>
</evidence>
<name>FLZ18_ARATH</name>
<protein>
    <recommendedName>
        <fullName evidence="6">FCS-Like Zinc finger 18</fullName>
    </recommendedName>
</protein>
<organism>
    <name type="scientific">Arabidopsis thaliana</name>
    <name type="common">Mouse-ear cress</name>
    <dbReference type="NCBI Taxonomy" id="3702"/>
    <lineage>
        <taxon>Eukaryota</taxon>
        <taxon>Viridiplantae</taxon>
        <taxon>Streptophyta</taxon>
        <taxon>Embryophyta</taxon>
        <taxon>Tracheophyta</taxon>
        <taxon>Spermatophyta</taxon>
        <taxon>Magnoliopsida</taxon>
        <taxon>eudicotyledons</taxon>
        <taxon>Gunneridae</taxon>
        <taxon>Pentapetalae</taxon>
        <taxon>rosids</taxon>
        <taxon>malvids</taxon>
        <taxon>Brassicales</taxon>
        <taxon>Brassicaceae</taxon>
        <taxon>Camelineae</taxon>
        <taxon>Arabidopsis</taxon>
    </lineage>
</organism>
<keyword id="KW-0963">Cytoplasm</keyword>
<keyword id="KW-0479">Metal-binding</keyword>
<keyword id="KW-0539">Nucleus</keyword>
<keyword id="KW-1185">Reference proteome</keyword>
<keyword id="KW-0862">Zinc</keyword>
<keyword id="KW-0863">Zinc-finger</keyword>
<dbReference type="EMBL" id="AC009324">
    <property type="status" value="NOT_ANNOTATED_CDS"/>
    <property type="molecule type" value="Genomic_DNA"/>
</dbReference>
<dbReference type="EMBL" id="CP002684">
    <property type="protein sequence ID" value="AEE33021.1"/>
    <property type="molecule type" value="Genomic_DNA"/>
</dbReference>
<dbReference type="EMBL" id="AK118646">
    <property type="protein sequence ID" value="BAC43242.1"/>
    <property type="molecule type" value="mRNA"/>
</dbReference>
<dbReference type="EMBL" id="BT004725">
    <property type="protein sequence ID" value="AAO42971.1"/>
    <property type="molecule type" value="mRNA"/>
</dbReference>
<dbReference type="RefSeq" id="NP_001117487.1">
    <property type="nucleotide sequence ID" value="NM_001124015.2"/>
</dbReference>
<dbReference type="RefSeq" id="NP_564644.1">
    <property type="nucleotide sequence ID" value="NM_104266.3"/>
</dbReference>
<dbReference type="SMR" id="P0DO12"/>
<dbReference type="EnsemblPlants" id="AT1G53885.1">
    <property type="protein sequence ID" value="AT1G53885.1"/>
    <property type="gene ID" value="AT1G53885"/>
</dbReference>
<dbReference type="EnsemblPlants" id="AT1G53903.1">
    <property type="protein sequence ID" value="AT1G53903.1"/>
    <property type="gene ID" value="AT1G53903"/>
</dbReference>
<dbReference type="GeneID" id="6241094"/>
<dbReference type="Gramene" id="AT1G53885.1">
    <property type="protein sequence ID" value="AT1G53885.1"/>
    <property type="gene ID" value="AT1G53885"/>
</dbReference>
<dbReference type="Gramene" id="AT1G53903.1">
    <property type="protein sequence ID" value="AT1G53903.1"/>
    <property type="gene ID" value="AT1G53903"/>
</dbReference>
<dbReference type="KEGG" id="ath:AT1G53885"/>
<dbReference type="KEGG" id="ath:AT1G53903"/>
<dbReference type="Araport" id="AT1G53903"/>
<dbReference type="TAIR" id="AT1G53903"/>
<dbReference type="InParanoid" id="P0DO12"/>
<dbReference type="OMA" id="CYLKSCY"/>
<dbReference type="PRO" id="PR:P0DO12"/>
<dbReference type="Proteomes" id="UP000006548">
    <property type="component" value="Chromosome 1"/>
</dbReference>
<dbReference type="ExpressionAtlas" id="P0DO12">
    <property type="expression patterns" value="differential"/>
</dbReference>
<dbReference type="GO" id="GO:0005737">
    <property type="term" value="C:cytoplasm"/>
    <property type="evidence" value="ECO:0000314"/>
    <property type="project" value="UniProtKB"/>
</dbReference>
<dbReference type="GO" id="GO:0005634">
    <property type="term" value="C:nucleus"/>
    <property type="evidence" value="ECO:0000314"/>
    <property type="project" value="UniProtKB"/>
</dbReference>
<dbReference type="GO" id="GO:0008270">
    <property type="term" value="F:zinc ion binding"/>
    <property type="evidence" value="ECO:0007669"/>
    <property type="project" value="UniProtKB-KW"/>
</dbReference>
<dbReference type="GO" id="GO:0009737">
    <property type="term" value="P:response to abscisic acid"/>
    <property type="evidence" value="ECO:0000270"/>
    <property type="project" value="UniProtKB"/>
</dbReference>
<dbReference type="GO" id="GO:0009749">
    <property type="term" value="P:response to glucose"/>
    <property type="evidence" value="ECO:0000270"/>
    <property type="project" value="UniProtKB"/>
</dbReference>
<dbReference type="GO" id="GO:1905582">
    <property type="term" value="P:response to mannose"/>
    <property type="evidence" value="ECO:0000270"/>
    <property type="project" value="UniProtKB"/>
</dbReference>
<dbReference type="GO" id="GO:1902074">
    <property type="term" value="P:response to salt"/>
    <property type="evidence" value="ECO:0000270"/>
    <property type="project" value="UniProtKB"/>
</dbReference>
<dbReference type="GO" id="GO:0042594">
    <property type="term" value="P:response to starvation"/>
    <property type="evidence" value="ECO:0000270"/>
    <property type="project" value="UniProtKB"/>
</dbReference>
<dbReference type="GO" id="GO:0009744">
    <property type="term" value="P:response to sucrose"/>
    <property type="evidence" value="ECO:0000270"/>
    <property type="project" value="UniProtKB"/>
</dbReference>
<dbReference type="InterPro" id="IPR044181">
    <property type="entry name" value="FLZ17/18"/>
</dbReference>
<dbReference type="InterPro" id="IPR007650">
    <property type="entry name" value="Zf-FLZ_dom"/>
</dbReference>
<dbReference type="PANTHER" id="PTHR47847">
    <property type="entry name" value="FCS-LIKE ZINC FINGER 17"/>
    <property type="match status" value="1"/>
</dbReference>
<dbReference type="PANTHER" id="PTHR47847:SF2">
    <property type="entry name" value="FCS-LIKE ZINC FINGER 17-RELATED"/>
    <property type="match status" value="1"/>
</dbReference>
<dbReference type="Pfam" id="PF04570">
    <property type="entry name" value="zf-FLZ"/>
    <property type="match status" value="1"/>
</dbReference>
<dbReference type="PROSITE" id="PS51795">
    <property type="entry name" value="ZF_FLZ"/>
    <property type="match status" value="1"/>
</dbReference>
<proteinExistence type="evidence at protein level"/>
<accession>P0DO12</accession>
<accession>Q8GWT6</accession>